<reference key="1">
    <citation type="journal article" date="2009" name="PLoS Genet.">
        <title>Organised genome dynamics in the Escherichia coli species results in highly diverse adaptive paths.</title>
        <authorList>
            <person name="Touchon M."/>
            <person name="Hoede C."/>
            <person name="Tenaillon O."/>
            <person name="Barbe V."/>
            <person name="Baeriswyl S."/>
            <person name="Bidet P."/>
            <person name="Bingen E."/>
            <person name="Bonacorsi S."/>
            <person name="Bouchier C."/>
            <person name="Bouvet O."/>
            <person name="Calteau A."/>
            <person name="Chiapello H."/>
            <person name="Clermont O."/>
            <person name="Cruveiller S."/>
            <person name="Danchin A."/>
            <person name="Diard M."/>
            <person name="Dossat C."/>
            <person name="Karoui M.E."/>
            <person name="Frapy E."/>
            <person name="Garry L."/>
            <person name="Ghigo J.M."/>
            <person name="Gilles A.M."/>
            <person name="Johnson J."/>
            <person name="Le Bouguenec C."/>
            <person name="Lescat M."/>
            <person name="Mangenot S."/>
            <person name="Martinez-Jehanne V."/>
            <person name="Matic I."/>
            <person name="Nassif X."/>
            <person name="Oztas S."/>
            <person name="Petit M.A."/>
            <person name="Pichon C."/>
            <person name="Rouy Z."/>
            <person name="Ruf C.S."/>
            <person name="Schneider D."/>
            <person name="Tourret J."/>
            <person name="Vacherie B."/>
            <person name="Vallenet D."/>
            <person name="Medigue C."/>
            <person name="Rocha E.P.C."/>
            <person name="Denamur E."/>
        </authorList>
    </citation>
    <scope>NUCLEOTIDE SEQUENCE [LARGE SCALE GENOMIC DNA]</scope>
    <source>
        <strain>ED1a</strain>
    </source>
</reference>
<protein>
    <recommendedName>
        <fullName evidence="1">Chorismate synthase</fullName>
        <shortName evidence="1">CS</shortName>
        <ecNumber evidence="1">4.2.3.5</ecNumber>
    </recommendedName>
    <alternativeName>
        <fullName evidence="1">5-enolpyruvylshikimate-3-phosphate phospholyase</fullName>
    </alternativeName>
</protein>
<gene>
    <name evidence="1" type="primary">aroC</name>
    <name type="ordered locus">ECED1_2793</name>
</gene>
<proteinExistence type="inferred from homology"/>
<feature type="chain" id="PRO_1000132771" description="Chorismate synthase">
    <location>
        <begin position="1"/>
        <end position="361"/>
    </location>
</feature>
<feature type="binding site" evidence="1">
    <location>
        <position position="48"/>
    </location>
    <ligand>
        <name>NADP(+)</name>
        <dbReference type="ChEBI" id="CHEBI:58349"/>
    </ligand>
</feature>
<feature type="binding site" evidence="1">
    <location>
        <position position="54"/>
    </location>
    <ligand>
        <name>NADP(+)</name>
        <dbReference type="ChEBI" id="CHEBI:58349"/>
    </ligand>
</feature>
<feature type="binding site" evidence="1">
    <location>
        <begin position="125"/>
        <end position="127"/>
    </location>
    <ligand>
        <name>FMN</name>
        <dbReference type="ChEBI" id="CHEBI:58210"/>
    </ligand>
</feature>
<feature type="binding site" evidence="1">
    <location>
        <begin position="238"/>
        <end position="239"/>
    </location>
    <ligand>
        <name>FMN</name>
        <dbReference type="ChEBI" id="CHEBI:58210"/>
    </ligand>
</feature>
<feature type="binding site" evidence="1">
    <location>
        <position position="278"/>
    </location>
    <ligand>
        <name>FMN</name>
        <dbReference type="ChEBI" id="CHEBI:58210"/>
    </ligand>
</feature>
<feature type="binding site" evidence="1">
    <location>
        <begin position="293"/>
        <end position="297"/>
    </location>
    <ligand>
        <name>FMN</name>
        <dbReference type="ChEBI" id="CHEBI:58210"/>
    </ligand>
</feature>
<feature type="binding site" evidence="1">
    <location>
        <position position="319"/>
    </location>
    <ligand>
        <name>FMN</name>
        <dbReference type="ChEBI" id="CHEBI:58210"/>
    </ligand>
</feature>
<evidence type="ECO:0000255" key="1">
    <source>
        <dbReference type="HAMAP-Rule" id="MF_00300"/>
    </source>
</evidence>
<dbReference type="EC" id="4.2.3.5" evidence="1"/>
<dbReference type="EMBL" id="CU928162">
    <property type="protein sequence ID" value="CAR08972.2"/>
    <property type="molecule type" value="Genomic_DNA"/>
</dbReference>
<dbReference type="RefSeq" id="WP_001297933.1">
    <property type="nucleotide sequence ID" value="NC_011745.1"/>
</dbReference>
<dbReference type="SMR" id="B7MY06"/>
<dbReference type="KEGG" id="ecq:ECED1_2793"/>
<dbReference type="HOGENOM" id="CLU_034547_0_2_6"/>
<dbReference type="UniPathway" id="UPA00053">
    <property type="reaction ID" value="UER00090"/>
</dbReference>
<dbReference type="Proteomes" id="UP000000748">
    <property type="component" value="Chromosome"/>
</dbReference>
<dbReference type="GO" id="GO:0005829">
    <property type="term" value="C:cytosol"/>
    <property type="evidence" value="ECO:0007669"/>
    <property type="project" value="TreeGrafter"/>
</dbReference>
<dbReference type="GO" id="GO:0004107">
    <property type="term" value="F:chorismate synthase activity"/>
    <property type="evidence" value="ECO:0007669"/>
    <property type="project" value="UniProtKB-UniRule"/>
</dbReference>
<dbReference type="GO" id="GO:0010181">
    <property type="term" value="F:FMN binding"/>
    <property type="evidence" value="ECO:0007669"/>
    <property type="project" value="TreeGrafter"/>
</dbReference>
<dbReference type="GO" id="GO:0008652">
    <property type="term" value="P:amino acid biosynthetic process"/>
    <property type="evidence" value="ECO:0007669"/>
    <property type="project" value="UniProtKB-KW"/>
</dbReference>
<dbReference type="GO" id="GO:0009073">
    <property type="term" value="P:aromatic amino acid family biosynthetic process"/>
    <property type="evidence" value="ECO:0007669"/>
    <property type="project" value="UniProtKB-KW"/>
</dbReference>
<dbReference type="GO" id="GO:0009423">
    <property type="term" value="P:chorismate biosynthetic process"/>
    <property type="evidence" value="ECO:0007669"/>
    <property type="project" value="UniProtKB-UniRule"/>
</dbReference>
<dbReference type="CDD" id="cd07304">
    <property type="entry name" value="Chorismate_synthase"/>
    <property type="match status" value="1"/>
</dbReference>
<dbReference type="FunFam" id="3.60.150.10:FF:000001">
    <property type="entry name" value="Chorismate synthase"/>
    <property type="match status" value="1"/>
</dbReference>
<dbReference type="Gene3D" id="3.60.150.10">
    <property type="entry name" value="Chorismate synthase AroC"/>
    <property type="match status" value="1"/>
</dbReference>
<dbReference type="HAMAP" id="MF_00300">
    <property type="entry name" value="Chorismate_synth"/>
    <property type="match status" value="1"/>
</dbReference>
<dbReference type="InterPro" id="IPR000453">
    <property type="entry name" value="Chorismate_synth"/>
</dbReference>
<dbReference type="InterPro" id="IPR035904">
    <property type="entry name" value="Chorismate_synth_AroC_sf"/>
</dbReference>
<dbReference type="InterPro" id="IPR020541">
    <property type="entry name" value="Chorismate_synthase_CS"/>
</dbReference>
<dbReference type="NCBIfam" id="TIGR00033">
    <property type="entry name" value="aroC"/>
    <property type="match status" value="1"/>
</dbReference>
<dbReference type="NCBIfam" id="NF003793">
    <property type="entry name" value="PRK05382.1"/>
    <property type="match status" value="1"/>
</dbReference>
<dbReference type="PANTHER" id="PTHR21085">
    <property type="entry name" value="CHORISMATE SYNTHASE"/>
    <property type="match status" value="1"/>
</dbReference>
<dbReference type="PANTHER" id="PTHR21085:SF0">
    <property type="entry name" value="CHORISMATE SYNTHASE"/>
    <property type="match status" value="1"/>
</dbReference>
<dbReference type="Pfam" id="PF01264">
    <property type="entry name" value="Chorismate_synt"/>
    <property type="match status" value="1"/>
</dbReference>
<dbReference type="PIRSF" id="PIRSF001456">
    <property type="entry name" value="Chorismate_synth"/>
    <property type="match status" value="1"/>
</dbReference>
<dbReference type="SUPFAM" id="SSF103263">
    <property type="entry name" value="Chorismate synthase, AroC"/>
    <property type="match status" value="1"/>
</dbReference>
<dbReference type="PROSITE" id="PS00787">
    <property type="entry name" value="CHORISMATE_SYNTHASE_1"/>
    <property type="match status" value="1"/>
</dbReference>
<dbReference type="PROSITE" id="PS00788">
    <property type="entry name" value="CHORISMATE_SYNTHASE_2"/>
    <property type="match status" value="1"/>
</dbReference>
<dbReference type="PROSITE" id="PS00789">
    <property type="entry name" value="CHORISMATE_SYNTHASE_3"/>
    <property type="match status" value="1"/>
</dbReference>
<comment type="function">
    <text evidence="1">Catalyzes the anti-1,4-elimination of the C-3 phosphate and the C-6 proR hydrogen from 5-enolpyruvylshikimate-3-phosphate (EPSP) to yield chorismate, which is the branch point compound that serves as the starting substrate for the three terminal pathways of aromatic amino acid biosynthesis. This reaction introduces a second double bond into the aromatic ring system.</text>
</comment>
<comment type="catalytic activity">
    <reaction evidence="1">
        <text>5-O-(1-carboxyvinyl)-3-phosphoshikimate = chorismate + phosphate</text>
        <dbReference type="Rhea" id="RHEA:21020"/>
        <dbReference type="ChEBI" id="CHEBI:29748"/>
        <dbReference type="ChEBI" id="CHEBI:43474"/>
        <dbReference type="ChEBI" id="CHEBI:57701"/>
        <dbReference type="EC" id="4.2.3.5"/>
    </reaction>
</comment>
<comment type="cofactor">
    <cofactor evidence="1">
        <name>FMNH2</name>
        <dbReference type="ChEBI" id="CHEBI:57618"/>
    </cofactor>
    <text evidence="1">Reduced FMN (FMNH(2)).</text>
</comment>
<comment type="pathway">
    <text evidence="1">Metabolic intermediate biosynthesis; chorismate biosynthesis; chorismate from D-erythrose 4-phosphate and phosphoenolpyruvate: step 7/7.</text>
</comment>
<comment type="subunit">
    <text evidence="1">Homotetramer.</text>
</comment>
<comment type="similarity">
    <text evidence="1">Belongs to the chorismate synthase family.</text>
</comment>
<organism>
    <name type="scientific">Escherichia coli O81 (strain ED1a)</name>
    <dbReference type="NCBI Taxonomy" id="585397"/>
    <lineage>
        <taxon>Bacteria</taxon>
        <taxon>Pseudomonadati</taxon>
        <taxon>Pseudomonadota</taxon>
        <taxon>Gammaproteobacteria</taxon>
        <taxon>Enterobacterales</taxon>
        <taxon>Enterobacteriaceae</taxon>
        <taxon>Escherichia</taxon>
    </lineage>
</organism>
<name>AROC_ECO81</name>
<sequence length="361" mass="39151">MAGNTIGQLFRVTTFGESHGLALGCIVDGVPPGIPLTEADLQHDLDRRRPGTSRYTTQRREPDQVKILSGVFEGVTTGTSIGLLIENTDQRSQDYSAIKDVFRPGHADYTYEQKYGLRDYRGGGRSSARETAMRVAAGAIAKKYLAEKFGIEIRGCLTQMGDIPLEIKDWSQVEQNPFFCPDPDKIDALDELMRALKKEGDSIGAKVTVVASGVPAGLGEPVFDRLDADIAHALMSINAVKGVEIGDGFDVVALRGSQNRDEITKDGFQSNHAGGILGGISSGQQIIAHMALKPTSSITVPGRTINRFGEEVEMITKGRHDPCVGIRAVPIAEAMLAIVLMDHLLRQRAQNADVKTDIPRW</sequence>
<accession>B7MY06</accession>
<keyword id="KW-0028">Amino-acid biosynthesis</keyword>
<keyword id="KW-0057">Aromatic amino acid biosynthesis</keyword>
<keyword id="KW-0274">FAD</keyword>
<keyword id="KW-0285">Flavoprotein</keyword>
<keyword id="KW-0288">FMN</keyword>
<keyword id="KW-0456">Lyase</keyword>
<keyword id="KW-0521">NADP</keyword>